<proteinExistence type="inferred from homology"/>
<keyword id="KW-0556">Organic radical</keyword>
<keyword id="KW-1185">Reference proteome</keyword>
<dbReference type="EMBL" id="CP000822">
    <property type="protein sequence ID" value="ABV11371.1"/>
    <property type="molecule type" value="Genomic_DNA"/>
</dbReference>
<dbReference type="RefSeq" id="WP_012131205.1">
    <property type="nucleotide sequence ID" value="NC_009792.1"/>
</dbReference>
<dbReference type="SMR" id="A8AD08"/>
<dbReference type="STRING" id="290338.CKO_00205"/>
<dbReference type="GeneID" id="45134495"/>
<dbReference type="KEGG" id="cko:CKO_00205"/>
<dbReference type="HOGENOM" id="CLU_133780_0_0_6"/>
<dbReference type="OrthoDB" id="9803969at2"/>
<dbReference type="Proteomes" id="UP000008148">
    <property type="component" value="Chromosome"/>
</dbReference>
<dbReference type="GO" id="GO:0005829">
    <property type="term" value="C:cytosol"/>
    <property type="evidence" value="ECO:0007669"/>
    <property type="project" value="TreeGrafter"/>
</dbReference>
<dbReference type="GO" id="GO:0008861">
    <property type="term" value="F:formate C-acetyltransferase activity"/>
    <property type="evidence" value="ECO:0007669"/>
    <property type="project" value="TreeGrafter"/>
</dbReference>
<dbReference type="FunFam" id="3.20.70.20:FF:000002">
    <property type="entry name" value="Autonomous glycyl radical cofactor"/>
    <property type="match status" value="1"/>
</dbReference>
<dbReference type="Gene3D" id="3.20.70.20">
    <property type="match status" value="1"/>
</dbReference>
<dbReference type="HAMAP" id="MF_00806">
    <property type="entry name" value="GrcA"/>
    <property type="match status" value="1"/>
</dbReference>
<dbReference type="InterPro" id="IPR050244">
    <property type="entry name" value="Auton_GlycylRad_Cofactor"/>
</dbReference>
<dbReference type="InterPro" id="IPR019777">
    <property type="entry name" value="Form_AcTrfase_GR_CS"/>
</dbReference>
<dbReference type="InterPro" id="IPR001150">
    <property type="entry name" value="Gly_radical"/>
</dbReference>
<dbReference type="InterPro" id="IPR011140">
    <property type="entry name" value="Glycyl_radical_cofactor_GrcA"/>
</dbReference>
<dbReference type="NCBIfam" id="TIGR04365">
    <property type="entry name" value="spare_glycyl"/>
    <property type="match status" value="1"/>
</dbReference>
<dbReference type="PANTHER" id="PTHR30191">
    <property type="entry name" value="FORMATE ACETYLTRANSFERASE"/>
    <property type="match status" value="1"/>
</dbReference>
<dbReference type="PANTHER" id="PTHR30191:SF0">
    <property type="entry name" value="FORMATE ACETYLTRANSFERASE 1"/>
    <property type="match status" value="1"/>
</dbReference>
<dbReference type="Pfam" id="PF01228">
    <property type="entry name" value="Gly_radical"/>
    <property type="match status" value="1"/>
</dbReference>
<dbReference type="PIRSF" id="PIRSF000378">
    <property type="entry name" value="Gly_radicl_yfiD"/>
    <property type="match status" value="1"/>
</dbReference>
<dbReference type="SUPFAM" id="SSF51998">
    <property type="entry name" value="PFL-like glycyl radical enzymes"/>
    <property type="match status" value="1"/>
</dbReference>
<dbReference type="PROSITE" id="PS00850">
    <property type="entry name" value="GLY_RADICAL_1"/>
    <property type="match status" value="1"/>
</dbReference>
<dbReference type="PROSITE" id="PS51149">
    <property type="entry name" value="GLY_RADICAL_2"/>
    <property type="match status" value="1"/>
</dbReference>
<reference key="1">
    <citation type="submission" date="2007-08" db="EMBL/GenBank/DDBJ databases">
        <authorList>
            <consortium name="The Citrobacter koseri Genome Sequencing Project"/>
            <person name="McClelland M."/>
            <person name="Sanderson E.K."/>
            <person name="Porwollik S."/>
            <person name="Spieth J."/>
            <person name="Clifton W.S."/>
            <person name="Latreille P."/>
            <person name="Courtney L."/>
            <person name="Wang C."/>
            <person name="Pepin K."/>
            <person name="Bhonagiri V."/>
            <person name="Nash W."/>
            <person name="Johnson M."/>
            <person name="Thiruvilangam P."/>
            <person name="Wilson R."/>
        </authorList>
    </citation>
    <scope>NUCLEOTIDE SEQUENCE [LARGE SCALE GENOMIC DNA]</scope>
    <source>
        <strain>ATCC BAA-895 / CDC 4225-83 / SGSC4696</strain>
    </source>
</reference>
<organism>
    <name type="scientific">Citrobacter koseri (strain ATCC BAA-895 / CDC 4225-83 / SGSC4696)</name>
    <dbReference type="NCBI Taxonomy" id="290338"/>
    <lineage>
        <taxon>Bacteria</taxon>
        <taxon>Pseudomonadati</taxon>
        <taxon>Pseudomonadota</taxon>
        <taxon>Gammaproteobacteria</taxon>
        <taxon>Enterobacterales</taxon>
        <taxon>Enterobacteriaceae</taxon>
        <taxon>Citrobacter</taxon>
    </lineage>
</organism>
<accession>A8AD08</accession>
<sequence>MITGIQITKAANDDLLNSFWLLDSEKGEARCIAAKAGFAEDEVVAVNKLGEIEYREIPMEVKPEVRVEGGQHLNVNVLRRETLEDAVKHPEKYPQLTIRVSGYAVRFNSLTPEQQRDVIARTFTESL</sequence>
<feature type="chain" id="PRO_1000083715" description="Autonomous glycyl radical cofactor">
    <location>
        <begin position="1"/>
        <end position="127"/>
    </location>
</feature>
<feature type="domain" description="Glycine radical" evidence="1">
    <location>
        <begin position="5"/>
        <end position="127"/>
    </location>
</feature>
<feature type="modified residue" description="Glycine radical" evidence="1">
    <location>
        <position position="102"/>
    </location>
</feature>
<evidence type="ECO:0000255" key="1">
    <source>
        <dbReference type="HAMAP-Rule" id="MF_00806"/>
    </source>
</evidence>
<protein>
    <recommendedName>
        <fullName evidence="1">Autonomous glycyl radical cofactor</fullName>
    </recommendedName>
</protein>
<comment type="function">
    <text evidence="1">Acts as a radical domain for damaged PFL and possibly other radical proteins.</text>
</comment>
<name>GRCA_CITK8</name>
<gene>
    <name evidence="1" type="primary">grcA</name>
    <name type="ordered locus">CKO_00205</name>
</gene>